<protein>
    <recommendedName>
        <fullName evidence="1">Acetyl-coenzyme A carboxylase carboxyl transferase subunit beta</fullName>
        <shortName evidence="1">ACCase subunit beta</shortName>
        <shortName evidence="1">Acetyl-CoA carboxylase carboxyltransferase subunit beta</shortName>
        <ecNumber evidence="1">2.1.3.15</ecNumber>
    </recommendedName>
</protein>
<organism>
    <name type="scientific">Bacillus pumilus (strain SAFR-032)</name>
    <dbReference type="NCBI Taxonomy" id="315750"/>
    <lineage>
        <taxon>Bacteria</taxon>
        <taxon>Bacillati</taxon>
        <taxon>Bacillota</taxon>
        <taxon>Bacilli</taxon>
        <taxon>Bacillales</taxon>
        <taxon>Bacillaceae</taxon>
        <taxon>Bacillus</taxon>
    </lineage>
</organism>
<sequence length="291" mass="32023">MSIKNIFSKKKKYASVPSEQASQDVPEGIMTKCPQCKKIMLTKELDKNLRVCMNCGRHLQMNAKQRIDSLVDEGTFEEFNGHLISENPLGFPGYEEKLEKDREKTSLNEAIVTGQGEIEGKRAVIAVMDATFRMGSMGSVVGEKITLAIEKAKADKVPFIIFTASGGARMQEGILSLMQMAKTSSALKLFSEDQGLIISVMTNPTTGGVSASFASLGDYNFAEPGALIGFAGRRIIEQTIREDLPEDFQTAEFLLKHGQLDAVIHRAEMKETLGRILALHSTGGEREWLEN</sequence>
<proteinExistence type="inferred from homology"/>
<dbReference type="EC" id="2.1.3.15" evidence="1"/>
<dbReference type="EMBL" id="CP000813">
    <property type="protein sequence ID" value="ABV63224.1"/>
    <property type="molecule type" value="Genomic_DNA"/>
</dbReference>
<dbReference type="RefSeq" id="WP_012010866.1">
    <property type="nucleotide sequence ID" value="NZ_VEIS01000006.1"/>
</dbReference>
<dbReference type="SMR" id="A8FG57"/>
<dbReference type="STRING" id="315750.BPUM_2564"/>
<dbReference type="GeneID" id="5621829"/>
<dbReference type="KEGG" id="bpu:BPUM_2564"/>
<dbReference type="eggNOG" id="COG0777">
    <property type="taxonomic scope" value="Bacteria"/>
</dbReference>
<dbReference type="HOGENOM" id="CLU_015486_1_1_9"/>
<dbReference type="OrthoDB" id="9772975at2"/>
<dbReference type="UniPathway" id="UPA00655">
    <property type="reaction ID" value="UER00711"/>
</dbReference>
<dbReference type="Proteomes" id="UP000001355">
    <property type="component" value="Chromosome"/>
</dbReference>
<dbReference type="GO" id="GO:0009317">
    <property type="term" value="C:acetyl-CoA carboxylase complex"/>
    <property type="evidence" value="ECO:0007669"/>
    <property type="project" value="InterPro"/>
</dbReference>
<dbReference type="GO" id="GO:0003989">
    <property type="term" value="F:acetyl-CoA carboxylase activity"/>
    <property type="evidence" value="ECO:0007669"/>
    <property type="project" value="InterPro"/>
</dbReference>
<dbReference type="GO" id="GO:0005524">
    <property type="term" value="F:ATP binding"/>
    <property type="evidence" value="ECO:0007669"/>
    <property type="project" value="UniProtKB-KW"/>
</dbReference>
<dbReference type="GO" id="GO:0016743">
    <property type="term" value="F:carboxyl- or carbamoyltransferase activity"/>
    <property type="evidence" value="ECO:0007669"/>
    <property type="project" value="UniProtKB-UniRule"/>
</dbReference>
<dbReference type="GO" id="GO:0008270">
    <property type="term" value="F:zinc ion binding"/>
    <property type="evidence" value="ECO:0007669"/>
    <property type="project" value="UniProtKB-UniRule"/>
</dbReference>
<dbReference type="GO" id="GO:0006633">
    <property type="term" value="P:fatty acid biosynthetic process"/>
    <property type="evidence" value="ECO:0007669"/>
    <property type="project" value="UniProtKB-KW"/>
</dbReference>
<dbReference type="GO" id="GO:2001295">
    <property type="term" value="P:malonyl-CoA biosynthetic process"/>
    <property type="evidence" value="ECO:0007669"/>
    <property type="project" value="UniProtKB-UniRule"/>
</dbReference>
<dbReference type="Gene3D" id="3.90.226.10">
    <property type="entry name" value="2-enoyl-CoA Hydratase, Chain A, domain 1"/>
    <property type="match status" value="1"/>
</dbReference>
<dbReference type="HAMAP" id="MF_01395">
    <property type="entry name" value="AcetylCoA_CT_beta"/>
    <property type="match status" value="1"/>
</dbReference>
<dbReference type="InterPro" id="IPR034733">
    <property type="entry name" value="AcCoA_carboxyl_beta"/>
</dbReference>
<dbReference type="InterPro" id="IPR000438">
    <property type="entry name" value="Acetyl_CoA_COase_Trfase_b_su"/>
</dbReference>
<dbReference type="InterPro" id="IPR029045">
    <property type="entry name" value="ClpP/crotonase-like_dom_sf"/>
</dbReference>
<dbReference type="InterPro" id="IPR011762">
    <property type="entry name" value="COA_CT_N"/>
</dbReference>
<dbReference type="InterPro" id="IPR041010">
    <property type="entry name" value="Znf-ACC"/>
</dbReference>
<dbReference type="NCBIfam" id="TIGR00515">
    <property type="entry name" value="accD"/>
    <property type="match status" value="1"/>
</dbReference>
<dbReference type="PANTHER" id="PTHR42995">
    <property type="entry name" value="ACETYL-COENZYME A CARBOXYLASE CARBOXYL TRANSFERASE SUBUNIT BETA, CHLOROPLASTIC"/>
    <property type="match status" value="1"/>
</dbReference>
<dbReference type="PANTHER" id="PTHR42995:SF5">
    <property type="entry name" value="ACETYL-COENZYME A CARBOXYLASE CARBOXYL TRANSFERASE SUBUNIT BETA, CHLOROPLASTIC"/>
    <property type="match status" value="1"/>
</dbReference>
<dbReference type="Pfam" id="PF01039">
    <property type="entry name" value="Carboxyl_trans"/>
    <property type="match status" value="1"/>
</dbReference>
<dbReference type="Pfam" id="PF17848">
    <property type="entry name" value="Zn_ribbon_ACC"/>
    <property type="match status" value="1"/>
</dbReference>
<dbReference type="PRINTS" id="PR01070">
    <property type="entry name" value="ACCCTRFRASEB"/>
</dbReference>
<dbReference type="SUPFAM" id="SSF52096">
    <property type="entry name" value="ClpP/crotonase"/>
    <property type="match status" value="1"/>
</dbReference>
<dbReference type="PROSITE" id="PS50980">
    <property type="entry name" value="COA_CT_NTER"/>
    <property type="match status" value="1"/>
</dbReference>
<reference key="1">
    <citation type="journal article" date="2007" name="PLoS ONE">
        <title>Paradoxical DNA repair and peroxide resistance gene conservation in Bacillus pumilus SAFR-032.</title>
        <authorList>
            <person name="Gioia J."/>
            <person name="Yerrapragada S."/>
            <person name="Qin X."/>
            <person name="Jiang H."/>
            <person name="Igboeli O.C."/>
            <person name="Muzny D."/>
            <person name="Dugan-Rocha S."/>
            <person name="Ding Y."/>
            <person name="Hawes A."/>
            <person name="Liu W."/>
            <person name="Perez L."/>
            <person name="Kovar C."/>
            <person name="Dinh H."/>
            <person name="Lee S."/>
            <person name="Nazareth L."/>
            <person name="Blyth P."/>
            <person name="Holder M."/>
            <person name="Buhay C."/>
            <person name="Tirumalai M.R."/>
            <person name="Liu Y."/>
            <person name="Dasgupta I."/>
            <person name="Bokhetache L."/>
            <person name="Fujita M."/>
            <person name="Karouia F."/>
            <person name="Eswara Moorthy P."/>
            <person name="Siefert J."/>
            <person name="Uzman A."/>
            <person name="Buzumbo P."/>
            <person name="Verma A."/>
            <person name="Zwiya H."/>
            <person name="McWilliams B.D."/>
            <person name="Olowu A."/>
            <person name="Clinkenbeard K.D."/>
            <person name="Newcombe D."/>
            <person name="Golebiewski L."/>
            <person name="Petrosino J.F."/>
            <person name="Nicholson W.L."/>
            <person name="Fox G.E."/>
            <person name="Venkateswaran K."/>
            <person name="Highlander S.K."/>
            <person name="Weinstock G.M."/>
        </authorList>
    </citation>
    <scope>NUCLEOTIDE SEQUENCE [LARGE SCALE GENOMIC DNA]</scope>
    <source>
        <strain>SAFR-032</strain>
    </source>
</reference>
<keyword id="KW-0067">ATP-binding</keyword>
<keyword id="KW-0963">Cytoplasm</keyword>
<keyword id="KW-0275">Fatty acid biosynthesis</keyword>
<keyword id="KW-0276">Fatty acid metabolism</keyword>
<keyword id="KW-0444">Lipid biosynthesis</keyword>
<keyword id="KW-0443">Lipid metabolism</keyword>
<keyword id="KW-0479">Metal-binding</keyword>
<keyword id="KW-0547">Nucleotide-binding</keyword>
<keyword id="KW-0808">Transferase</keyword>
<keyword id="KW-0862">Zinc</keyword>
<keyword id="KW-0863">Zinc-finger</keyword>
<evidence type="ECO:0000255" key="1">
    <source>
        <dbReference type="HAMAP-Rule" id="MF_01395"/>
    </source>
</evidence>
<evidence type="ECO:0000255" key="2">
    <source>
        <dbReference type="PROSITE-ProRule" id="PRU01136"/>
    </source>
</evidence>
<accession>A8FG57</accession>
<comment type="function">
    <text evidence="1">Component of the acetyl coenzyme A carboxylase (ACC) complex. Biotin carboxylase (BC) catalyzes the carboxylation of biotin on its carrier protein (BCCP) and then the CO(2) group is transferred by the transcarboxylase to acetyl-CoA to form malonyl-CoA.</text>
</comment>
<comment type="catalytic activity">
    <reaction evidence="1">
        <text>N(6)-carboxybiotinyl-L-lysyl-[protein] + acetyl-CoA = N(6)-biotinyl-L-lysyl-[protein] + malonyl-CoA</text>
        <dbReference type="Rhea" id="RHEA:54728"/>
        <dbReference type="Rhea" id="RHEA-COMP:10505"/>
        <dbReference type="Rhea" id="RHEA-COMP:10506"/>
        <dbReference type="ChEBI" id="CHEBI:57288"/>
        <dbReference type="ChEBI" id="CHEBI:57384"/>
        <dbReference type="ChEBI" id="CHEBI:83144"/>
        <dbReference type="ChEBI" id="CHEBI:83145"/>
        <dbReference type="EC" id="2.1.3.15"/>
    </reaction>
</comment>
<comment type="cofactor">
    <cofactor evidence="1">
        <name>Zn(2+)</name>
        <dbReference type="ChEBI" id="CHEBI:29105"/>
    </cofactor>
    <text evidence="1">Binds 1 zinc ion per subunit.</text>
</comment>
<comment type="pathway">
    <text evidence="1">Lipid metabolism; malonyl-CoA biosynthesis; malonyl-CoA from acetyl-CoA: step 1/1.</text>
</comment>
<comment type="subunit">
    <text evidence="1">Acetyl-CoA carboxylase is a heterohexamer composed of biotin carboxyl carrier protein (AccB), biotin carboxylase (AccC) and two subunits each of ACCase subunit alpha (AccA) and ACCase subunit beta (AccD).</text>
</comment>
<comment type="subcellular location">
    <subcellularLocation>
        <location evidence="1">Cytoplasm</location>
    </subcellularLocation>
</comment>
<comment type="similarity">
    <text evidence="1">Belongs to the AccD/PCCB family.</text>
</comment>
<feature type="chain" id="PRO_0000389685" description="Acetyl-coenzyme A carboxylase carboxyl transferase subunit beta">
    <location>
        <begin position="1"/>
        <end position="291"/>
    </location>
</feature>
<feature type="domain" description="CoA carboxyltransferase N-terminal" evidence="2">
    <location>
        <begin position="29"/>
        <end position="291"/>
    </location>
</feature>
<feature type="zinc finger region" description="C4-type" evidence="1">
    <location>
        <begin position="33"/>
        <end position="55"/>
    </location>
</feature>
<feature type="binding site" evidence="1">
    <location>
        <position position="33"/>
    </location>
    <ligand>
        <name>Zn(2+)</name>
        <dbReference type="ChEBI" id="CHEBI:29105"/>
    </ligand>
</feature>
<feature type="binding site" evidence="1">
    <location>
        <position position="36"/>
    </location>
    <ligand>
        <name>Zn(2+)</name>
        <dbReference type="ChEBI" id="CHEBI:29105"/>
    </ligand>
</feature>
<feature type="binding site" evidence="1">
    <location>
        <position position="52"/>
    </location>
    <ligand>
        <name>Zn(2+)</name>
        <dbReference type="ChEBI" id="CHEBI:29105"/>
    </ligand>
</feature>
<feature type="binding site" evidence="1">
    <location>
        <position position="55"/>
    </location>
    <ligand>
        <name>Zn(2+)</name>
        <dbReference type="ChEBI" id="CHEBI:29105"/>
    </ligand>
</feature>
<name>ACCD_BACP2</name>
<gene>
    <name evidence="1" type="primary">accD</name>
    <name type="ordered locus">BPUM_2564</name>
</gene>